<feature type="chain" id="PRO_0000107413" description="Probable helicase MJ1565">
    <location>
        <begin position="1"/>
        <end position="513"/>
    </location>
</feature>
<feature type="binding site" evidence="2">
    <location>
        <position position="151"/>
    </location>
    <ligand>
        <name>ATP</name>
        <dbReference type="ChEBI" id="CHEBI:30616"/>
    </ligand>
</feature>
<feature type="binding site" evidence="2">
    <location>
        <begin position="160"/>
        <end position="165"/>
    </location>
    <ligand>
        <name>ATP</name>
        <dbReference type="ChEBI" id="CHEBI:30616"/>
    </ligand>
</feature>
<feature type="binding site" evidence="2">
    <location>
        <begin position="467"/>
        <end position="468"/>
    </location>
    <ligand>
        <name>ATP</name>
        <dbReference type="ChEBI" id="CHEBI:30616"/>
    </ligand>
</feature>
<comment type="function">
    <text evidence="1">A probably bidirectional DNA helicase.</text>
</comment>
<comment type="catalytic activity">
    <reaction evidence="1">
        <text>Couples ATP hydrolysis with the unwinding of duplex DNA at the replication fork by translocating in the 5'-3' direction. This creates two antiparallel DNA single strands (ssDNA). The leading ssDNA polymer is the template for DNA polymerase III holoenzyme which synthesizes a continuous strand.</text>
        <dbReference type="EC" id="5.6.2.3"/>
    </reaction>
</comment>
<comment type="catalytic activity">
    <reaction evidence="1">
        <text>ATP + H2O = ADP + phosphate + H(+)</text>
        <dbReference type="Rhea" id="RHEA:13065"/>
        <dbReference type="ChEBI" id="CHEBI:15377"/>
        <dbReference type="ChEBI" id="CHEBI:15378"/>
        <dbReference type="ChEBI" id="CHEBI:30616"/>
        <dbReference type="ChEBI" id="CHEBI:43474"/>
        <dbReference type="ChEBI" id="CHEBI:456216"/>
        <dbReference type="EC" id="5.6.2.3"/>
    </reaction>
</comment>
<comment type="catalytic activity">
    <reaction evidence="1">
        <text>Couples ATP hydrolysis with the unwinding of duplex DNA by translocating in the 3'-5' direction.</text>
        <dbReference type="EC" id="5.6.2.4"/>
    </reaction>
</comment>
<comment type="catalytic activity">
    <reaction evidence="1">
        <text>ATP + H2O = ADP + phosphate + H(+)</text>
        <dbReference type="Rhea" id="RHEA:13065"/>
        <dbReference type="ChEBI" id="CHEBI:15377"/>
        <dbReference type="ChEBI" id="CHEBI:15378"/>
        <dbReference type="ChEBI" id="CHEBI:30616"/>
        <dbReference type="ChEBI" id="CHEBI:43474"/>
        <dbReference type="ChEBI" id="CHEBI:456216"/>
        <dbReference type="EC" id="5.6.2.4"/>
    </reaction>
</comment>
<comment type="similarity">
    <text evidence="3">Belongs to the HerA family.</text>
</comment>
<keyword id="KW-0067">ATP-binding</keyword>
<keyword id="KW-0238">DNA-binding</keyword>
<keyword id="KW-0347">Helicase</keyword>
<keyword id="KW-0378">Hydrolase</keyword>
<keyword id="KW-0413">Isomerase</keyword>
<keyword id="KW-0547">Nucleotide-binding</keyword>
<keyword id="KW-1185">Reference proteome</keyword>
<reference key="1">
    <citation type="journal article" date="1996" name="Science">
        <title>Complete genome sequence of the methanogenic archaeon, Methanococcus jannaschii.</title>
        <authorList>
            <person name="Bult C.J."/>
            <person name="White O."/>
            <person name="Olsen G.J."/>
            <person name="Zhou L."/>
            <person name="Fleischmann R.D."/>
            <person name="Sutton G.G."/>
            <person name="Blake J.A."/>
            <person name="FitzGerald L.M."/>
            <person name="Clayton R.A."/>
            <person name="Gocayne J.D."/>
            <person name="Kerlavage A.R."/>
            <person name="Dougherty B.A."/>
            <person name="Tomb J.-F."/>
            <person name="Adams M.D."/>
            <person name="Reich C.I."/>
            <person name="Overbeek R."/>
            <person name="Kirkness E.F."/>
            <person name="Weinstock K.G."/>
            <person name="Merrick J.M."/>
            <person name="Glodek A."/>
            <person name="Scott J.L."/>
            <person name="Geoghagen N.S.M."/>
            <person name="Weidman J.F."/>
            <person name="Fuhrmann J.L."/>
            <person name="Nguyen D."/>
            <person name="Utterback T.R."/>
            <person name="Kelley J.M."/>
            <person name="Peterson J.D."/>
            <person name="Sadow P.W."/>
            <person name="Hanna M.C."/>
            <person name="Cotton M.D."/>
            <person name="Roberts K.M."/>
            <person name="Hurst M.A."/>
            <person name="Kaine B.P."/>
            <person name="Borodovsky M."/>
            <person name="Klenk H.-P."/>
            <person name="Fraser C.M."/>
            <person name="Smith H.O."/>
            <person name="Woese C.R."/>
            <person name="Venter J.C."/>
        </authorList>
    </citation>
    <scope>NUCLEOTIDE SEQUENCE [LARGE SCALE GENOMIC DNA]</scope>
    <source>
        <strain>ATCC 43067 / DSM 2661 / JAL-1 / JCM 10045 / NBRC 100440</strain>
    </source>
</reference>
<gene>
    <name evidence="4" type="ordered locus">MJ1565</name>
</gene>
<sequence>MDNNEIIGYTIGETRIDELTFLAKEAPKVGDYVKINYDDSELLGMVESTIQGNMALEDILNIEHLEKIREFEDNSSYYILGKIKVLGDIRDLNKDGALKLPRVPPKPGIPIYRADDELLKKVFGNGHLKIGHLVTREDVEVKLDANKLCSRHLAILAMTGMGKSNTVAVLLRELNKLKATVLVFDMHGEYKDIYCESEKLRVHIIEPKINIYRINDDDLCDLAGVDAQATKQRPYIRKAIKEIKEERKEHDFSTVDDYINAIIGKLEEYKSNDNYKKDESSIQTAIFRLEDMLQFRKNIITLHYNPINDIREHYINIIPMEELDENAVDIVVSYIAKAVLDDRKRIIIDKGRDFAKPIFMIFEEAHLIAPQHRKTRAKHYLSRIAREGRKFGVGLCLVSQRPKTLDAETLSQCSNLIISKLIEPTDQKHVQMASENLSEDLVKQLTSLNIGEAIILGPCIKVPAIVKVDKFDGRYGGEDLNLVELWEKDFINTERLKTDDIEENAFGDDDLFS</sequence>
<accession>Q58960</accession>
<proteinExistence type="inferred from homology"/>
<evidence type="ECO:0000250" key="1">
    <source>
        <dbReference type="UniProtKB" id="F2Z5Z6"/>
    </source>
</evidence>
<evidence type="ECO:0000250" key="2">
    <source>
        <dbReference type="UniProtKB" id="Q97WG8"/>
    </source>
</evidence>
<evidence type="ECO:0000305" key="3"/>
<evidence type="ECO:0000312" key="4">
    <source>
        <dbReference type="EMBL" id="AAB99585.1"/>
    </source>
</evidence>
<organism>
    <name type="scientific">Methanocaldococcus jannaschii (strain ATCC 43067 / DSM 2661 / JAL-1 / JCM 10045 / NBRC 100440)</name>
    <name type="common">Methanococcus jannaschii</name>
    <dbReference type="NCBI Taxonomy" id="243232"/>
    <lineage>
        <taxon>Archaea</taxon>
        <taxon>Methanobacteriati</taxon>
        <taxon>Methanobacteriota</taxon>
        <taxon>Methanomada group</taxon>
        <taxon>Methanococci</taxon>
        <taxon>Methanococcales</taxon>
        <taxon>Methanocaldococcaceae</taxon>
        <taxon>Methanocaldococcus</taxon>
    </lineage>
</organism>
<dbReference type="EC" id="5.6.2.3" evidence="1"/>
<dbReference type="EC" id="5.6.2.4" evidence="1"/>
<dbReference type="EMBL" id="L77117">
    <property type="protein sequence ID" value="AAB99585.1"/>
    <property type="molecule type" value="Genomic_DNA"/>
</dbReference>
<dbReference type="PIR" id="D64495">
    <property type="entry name" value="D64495"/>
</dbReference>
<dbReference type="RefSeq" id="WP_010871089.1">
    <property type="nucleotide sequence ID" value="NC_000909.1"/>
</dbReference>
<dbReference type="SMR" id="Q58960"/>
<dbReference type="STRING" id="243232.MJ_1565"/>
<dbReference type="PaxDb" id="243232-MJ_1565"/>
<dbReference type="DNASU" id="1452473"/>
<dbReference type="EnsemblBacteria" id="AAB99585">
    <property type="protein sequence ID" value="AAB99585"/>
    <property type="gene ID" value="MJ_1565"/>
</dbReference>
<dbReference type="GeneID" id="1452473"/>
<dbReference type="KEGG" id="mja:MJ_1565"/>
<dbReference type="eggNOG" id="arCOG00280">
    <property type="taxonomic scope" value="Archaea"/>
</dbReference>
<dbReference type="HOGENOM" id="CLU_023842_2_0_2"/>
<dbReference type="InParanoid" id="Q58960"/>
<dbReference type="OrthoDB" id="107033at2157"/>
<dbReference type="PhylomeDB" id="Q58960"/>
<dbReference type="Proteomes" id="UP000000805">
    <property type="component" value="Chromosome"/>
</dbReference>
<dbReference type="GO" id="GO:0005524">
    <property type="term" value="F:ATP binding"/>
    <property type="evidence" value="ECO:0007669"/>
    <property type="project" value="UniProtKB-KW"/>
</dbReference>
<dbReference type="GO" id="GO:0016887">
    <property type="term" value="F:ATP hydrolysis activity"/>
    <property type="evidence" value="ECO:0007669"/>
    <property type="project" value="RHEA"/>
</dbReference>
<dbReference type="GO" id="GO:0004386">
    <property type="term" value="F:helicase activity"/>
    <property type="evidence" value="ECO:0007669"/>
    <property type="project" value="UniProtKB-KW"/>
</dbReference>
<dbReference type="Gene3D" id="3.40.50.300">
    <property type="entry name" value="P-loop containing nucleotide triphosphate hydrolases"/>
    <property type="match status" value="2"/>
</dbReference>
<dbReference type="InterPro" id="IPR008571">
    <property type="entry name" value="HerA-like"/>
</dbReference>
<dbReference type="InterPro" id="IPR018538">
    <property type="entry name" value="HerA_barrel_dom"/>
</dbReference>
<dbReference type="InterPro" id="IPR033186">
    <property type="entry name" value="HerA_C"/>
</dbReference>
<dbReference type="InterPro" id="IPR002789">
    <property type="entry name" value="HerA_central"/>
</dbReference>
<dbReference type="InterPro" id="IPR027417">
    <property type="entry name" value="P-loop_NTPase"/>
</dbReference>
<dbReference type="PANTHER" id="PTHR42957">
    <property type="entry name" value="HELICASE MJ1565-RELATED"/>
    <property type="match status" value="1"/>
</dbReference>
<dbReference type="PANTHER" id="PTHR42957:SF1">
    <property type="entry name" value="HELICASE MJ1565-RELATED"/>
    <property type="match status" value="1"/>
</dbReference>
<dbReference type="Pfam" id="PF01935">
    <property type="entry name" value="DUF87"/>
    <property type="match status" value="1"/>
</dbReference>
<dbReference type="Pfam" id="PF09378">
    <property type="entry name" value="HAS-barrel"/>
    <property type="match status" value="1"/>
</dbReference>
<dbReference type="Pfam" id="PF05872">
    <property type="entry name" value="HerA_C"/>
    <property type="match status" value="1"/>
</dbReference>
<dbReference type="SUPFAM" id="SSF52540">
    <property type="entry name" value="P-loop containing nucleoside triphosphate hydrolases"/>
    <property type="match status" value="1"/>
</dbReference>
<name>Y1565_METJA</name>
<protein>
    <recommendedName>
        <fullName evidence="3">Probable helicase MJ1565</fullName>
        <ecNumber evidence="1">5.6.2.3</ecNumber>
        <ecNumber evidence="1">5.6.2.4</ecNumber>
    </recommendedName>
    <alternativeName>
        <fullName evidence="3">Probable bidirectional DNA 3'-5' and 5'-3' helicase MJ1565</fullName>
    </alternativeName>
</protein>